<organism>
    <name type="scientific">Thermosipho melanesiensis (strain DSM 12029 / CIP 104789 / BI429)</name>
    <dbReference type="NCBI Taxonomy" id="391009"/>
    <lineage>
        <taxon>Bacteria</taxon>
        <taxon>Thermotogati</taxon>
        <taxon>Thermotogota</taxon>
        <taxon>Thermotogae</taxon>
        <taxon>Thermotogales</taxon>
        <taxon>Fervidobacteriaceae</taxon>
        <taxon>Thermosipho</taxon>
    </lineage>
</organism>
<protein>
    <recommendedName>
        <fullName evidence="1">tRNA-2-methylthio-N(6)-dimethylallyladenosine synthase</fullName>
        <ecNumber evidence="1">2.8.4.3</ecNumber>
    </recommendedName>
    <alternativeName>
        <fullName evidence="1">(Dimethylallyl)adenosine tRNA methylthiotransferase MiaB</fullName>
    </alternativeName>
    <alternativeName>
        <fullName evidence="1">tRNA-i(6)A37 methylthiotransferase</fullName>
    </alternativeName>
</protein>
<sequence>MKKIHIKTYGCQMNENDSEVAKFYLEEEGYEITNNENDADIVILNTCVVRKKSEDKFYSHIGELKKQNKIIGIMGCGAEKEKEKLFKRGVKFVIGTRAIPLIPQAVERAINGKKSAIFEDKMDEIDYKKILKRNSKHHAWITIIYGCNRFCTYCIVPYTRGREKSRKMDDIINEVENLAKSGIKEVTYLGQNVDAYGKDLNDGSSLAKLLNLTKDIEEIERIWFLTSYPTDFSLDIAHEVANSSKITKNIHLPVQHGSNKILKKMNRRYTIEEYIELINDIRKIVPDASISSDIIVGFPDETEEDFEKTVELVKNIKFERLNLAIYSPREGTIAWKYFEDNVPRIIKTKRMAYILNLQKEINKQLNENYLNKTVEIIVETKAKSGLYYGRDIRNKIIAFEGDKSLIGKKVLVKVKKTTAGPLYGDIIKIL</sequence>
<name>MIAB_THEM4</name>
<keyword id="KW-0004">4Fe-4S</keyword>
<keyword id="KW-0963">Cytoplasm</keyword>
<keyword id="KW-0408">Iron</keyword>
<keyword id="KW-0411">Iron-sulfur</keyword>
<keyword id="KW-0479">Metal-binding</keyword>
<keyword id="KW-0949">S-adenosyl-L-methionine</keyword>
<keyword id="KW-0808">Transferase</keyword>
<keyword id="KW-0819">tRNA processing</keyword>
<proteinExistence type="inferred from homology"/>
<reference key="1">
    <citation type="submission" date="2007-05" db="EMBL/GenBank/DDBJ databases">
        <title>Complete sequence of Thermosipho melanesiensis BI429.</title>
        <authorList>
            <consortium name="US DOE Joint Genome Institute"/>
            <person name="Copeland A."/>
            <person name="Lucas S."/>
            <person name="Lapidus A."/>
            <person name="Barry K."/>
            <person name="Glavina del Rio T."/>
            <person name="Dalin E."/>
            <person name="Tice H."/>
            <person name="Pitluck S."/>
            <person name="Chertkov O."/>
            <person name="Brettin T."/>
            <person name="Bruce D."/>
            <person name="Detter J.C."/>
            <person name="Han C."/>
            <person name="Schmutz J."/>
            <person name="Larimer F."/>
            <person name="Land M."/>
            <person name="Hauser L."/>
            <person name="Kyrpides N."/>
            <person name="Mikhailova N."/>
            <person name="Nelson K."/>
            <person name="Gogarten J.P."/>
            <person name="Noll K."/>
            <person name="Richardson P."/>
        </authorList>
    </citation>
    <scope>NUCLEOTIDE SEQUENCE [LARGE SCALE GENOMIC DNA]</scope>
    <source>
        <strain>DSM 12029 / CIP 104789 / BI429</strain>
    </source>
</reference>
<gene>
    <name evidence="1" type="primary">miaB</name>
    <name type="ordered locus">Tmel_0071</name>
</gene>
<evidence type="ECO:0000255" key="1">
    <source>
        <dbReference type="HAMAP-Rule" id="MF_01864"/>
    </source>
</evidence>
<evidence type="ECO:0000255" key="2">
    <source>
        <dbReference type="PROSITE-ProRule" id="PRU01266"/>
    </source>
</evidence>
<accession>A6LJ47</accession>
<dbReference type="EC" id="2.8.4.3" evidence="1"/>
<dbReference type="EMBL" id="CP000716">
    <property type="protein sequence ID" value="ABR29948.1"/>
    <property type="molecule type" value="Genomic_DNA"/>
</dbReference>
<dbReference type="RefSeq" id="WP_012056310.1">
    <property type="nucleotide sequence ID" value="NC_009616.1"/>
</dbReference>
<dbReference type="SMR" id="A6LJ47"/>
<dbReference type="STRING" id="391009.Tmel_0071"/>
<dbReference type="KEGG" id="tme:Tmel_0071"/>
<dbReference type="eggNOG" id="COG0621">
    <property type="taxonomic scope" value="Bacteria"/>
</dbReference>
<dbReference type="HOGENOM" id="CLU_018697_2_2_0"/>
<dbReference type="OrthoDB" id="9805215at2"/>
<dbReference type="Proteomes" id="UP000001110">
    <property type="component" value="Chromosome"/>
</dbReference>
<dbReference type="GO" id="GO:0005829">
    <property type="term" value="C:cytosol"/>
    <property type="evidence" value="ECO:0007669"/>
    <property type="project" value="TreeGrafter"/>
</dbReference>
<dbReference type="GO" id="GO:0051539">
    <property type="term" value="F:4 iron, 4 sulfur cluster binding"/>
    <property type="evidence" value="ECO:0007669"/>
    <property type="project" value="UniProtKB-UniRule"/>
</dbReference>
<dbReference type="GO" id="GO:0046872">
    <property type="term" value="F:metal ion binding"/>
    <property type="evidence" value="ECO:0007669"/>
    <property type="project" value="UniProtKB-KW"/>
</dbReference>
<dbReference type="GO" id="GO:0035597">
    <property type="term" value="F:N6-isopentenyladenosine methylthiotransferase activity"/>
    <property type="evidence" value="ECO:0007669"/>
    <property type="project" value="TreeGrafter"/>
</dbReference>
<dbReference type="CDD" id="cd01335">
    <property type="entry name" value="Radical_SAM"/>
    <property type="match status" value="1"/>
</dbReference>
<dbReference type="FunFam" id="3.40.50.12160:FF:000003">
    <property type="entry name" value="CDK5 regulatory subunit-associated protein 1"/>
    <property type="match status" value="1"/>
</dbReference>
<dbReference type="FunFam" id="3.80.30.20:FF:000001">
    <property type="entry name" value="tRNA-2-methylthio-N(6)-dimethylallyladenosine synthase 2"/>
    <property type="match status" value="1"/>
</dbReference>
<dbReference type="Gene3D" id="3.40.50.12160">
    <property type="entry name" value="Methylthiotransferase, N-terminal domain"/>
    <property type="match status" value="1"/>
</dbReference>
<dbReference type="Gene3D" id="3.80.30.20">
    <property type="entry name" value="tm_1862 like domain"/>
    <property type="match status" value="1"/>
</dbReference>
<dbReference type="HAMAP" id="MF_01864">
    <property type="entry name" value="tRNA_metthiotr_MiaB"/>
    <property type="match status" value="1"/>
</dbReference>
<dbReference type="InterPro" id="IPR006638">
    <property type="entry name" value="Elp3/MiaA/NifB-like_rSAM"/>
</dbReference>
<dbReference type="InterPro" id="IPR005839">
    <property type="entry name" value="Methylthiotransferase"/>
</dbReference>
<dbReference type="InterPro" id="IPR020612">
    <property type="entry name" value="Methylthiotransferase_CS"/>
</dbReference>
<dbReference type="InterPro" id="IPR013848">
    <property type="entry name" value="Methylthiotransferase_N"/>
</dbReference>
<dbReference type="InterPro" id="IPR038135">
    <property type="entry name" value="Methylthiotransferase_N_sf"/>
</dbReference>
<dbReference type="InterPro" id="IPR006463">
    <property type="entry name" value="MiaB_methiolase"/>
</dbReference>
<dbReference type="InterPro" id="IPR007197">
    <property type="entry name" value="rSAM"/>
</dbReference>
<dbReference type="InterPro" id="IPR023404">
    <property type="entry name" value="rSAM_horseshoe"/>
</dbReference>
<dbReference type="InterPro" id="IPR002792">
    <property type="entry name" value="TRAM_dom"/>
</dbReference>
<dbReference type="NCBIfam" id="TIGR01574">
    <property type="entry name" value="miaB-methiolase"/>
    <property type="match status" value="1"/>
</dbReference>
<dbReference type="NCBIfam" id="TIGR00089">
    <property type="entry name" value="MiaB/RimO family radical SAM methylthiotransferase"/>
    <property type="match status" value="1"/>
</dbReference>
<dbReference type="PANTHER" id="PTHR43020">
    <property type="entry name" value="CDK5 REGULATORY SUBUNIT-ASSOCIATED PROTEIN 1"/>
    <property type="match status" value="1"/>
</dbReference>
<dbReference type="PANTHER" id="PTHR43020:SF2">
    <property type="entry name" value="MITOCHONDRIAL TRNA METHYLTHIOTRANSFERASE CDK5RAP1"/>
    <property type="match status" value="1"/>
</dbReference>
<dbReference type="Pfam" id="PF04055">
    <property type="entry name" value="Radical_SAM"/>
    <property type="match status" value="1"/>
</dbReference>
<dbReference type="Pfam" id="PF01938">
    <property type="entry name" value="TRAM"/>
    <property type="match status" value="1"/>
</dbReference>
<dbReference type="Pfam" id="PF00919">
    <property type="entry name" value="UPF0004"/>
    <property type="match status" value="1"/>
</dbReference>
<dbReference type="SFLD" id="SFLDF00273">
    <property type="entry name" value="(dimethylallyl)adenosine_tRNA"/>
    <property type="match status" value="1"/>
</dbReference>
<dbReference type="SFLD" id="SFLDG01082">
    <property type="entry name" value="B12-binding_domain_containing"/>
    <property type="match status" value="1"/>
</dbReference>
<dbReference type="SFLD" id="SFLDG01061">
    <property type="entry name" value="methylthiotransferase"/>
    <property type="match status" value="1"/>
</dbReference>
<dbReference type="SMART" id="SM00729">
    <property type="entry name" value="Elp3"/>
    <property type="match status" value="1"/>
</dbReference>
<dbReference type="SUPFAM" id="SSF102114">
    <property type="entry name" value="Radical SAM enzymes"/>
    <property type="match status" value="1"/>
</dbReference>
<dbReference type="PROSITE" id="PS51449">
    <property type="entry name" value="MTTASE_N"/>
    <property type="match status" value="1"/>
</dbReference>
<dbReference type="PROSITE" id="PS01278">
    <property type="entry name" value="MTTASE_RADICAL"/>
    <property type="match status" value="1"/>
</dbReference>
<dbReference type="PROSITE" id="PS51918">
    <property type="entry name" value="RADICAL_SAM"/>
    <property type="match status" value="1"/>
</dbReference>
<dbReference type="PROSITE" id="PS50926">
    <property type="entry name" value="TRAM"/>
    <property type="match status" value="1"/>
</dbReference>
<comment type="function">
    <text evidence="1">Catalyzes the methylthiolation of N6-(dimethylallyl)adenosine (i(6)A), leading to the formation of 2-methylthio-N6-(dimethylallyl)adenosine (ms(2)i(6)A) at position 37 in tRNAs that read codons beginning with uridine.</text>
</comment>
<comment type="catalytic activity">
    <reaction evidence="1">
        <text>N(6)-dimethylallyladenosine(37) in tRNA + (sulfur carrier)-SH + AH2 + 2 S-adenosyl-L-methionine = 2-methylsulfanyl-N(6)-dimethylallyladenosine(37) in tRNA + (sulfur carrier)-H + 5'-deoxyadenosine + L-methionine + A + S-adenosyl-L-homocysteine + 2 H(+)</text>
        <dbReference type="Rhea" id="RHEA:37067"/>
        <dbReference type="Rhea" id="RHEA-COMP:10375"/>
        <dbReference type="Rhea" id="RHEA-COMP:10376"/>
        <dbReference type="Rhea" id="RHEA-COMP:14737"/>
        <dbReference type="Rhea" id="RHEA-COMP:14739"/>
        <dbReference type="ChEBI" id="CHEBI:13193"/>
        <dbReference type="ChEBI" id="CHEBI:15378"/>
        <dbReference type="ChEBI" id="CHEBI:17319"/>
        <dbReference type="ChEBI" id="CHEBI:17499"/>
        <dbReference type="ChEBI" id="CHEBI:29917"/>
        <dbReference type="ChEBI" id="CHEBI:57844"/>
        <dbReference type="ChEBI" id="CHEBI:57856"/>
        <dbReference type="ChEBI" id="CHEBI:59789"/>
        <dbReference type="ChEBI" id="CHEBI:64428"/>
        <dbReference type="ChEBI" id="CHEBI:74415"/>
        <dbReference type="ChEBI" id="CHEBI:74417"/>
        <dbReference type="EC" id="2.8.4.3"/>
    </reaction>
</comment>
<comment type="cofactor">
    <cofactor evidence="1">
        <name>[4Fe-4S] cluster</name>
        <dbReference type="ChEBI" id="CHEBI:49883"/>
    </cofactor>
    <text evidence="1">Binds 2 [4Fe-4S] clusters. One cluster is coordinated with 3 cysteines and an exchangeable S-adenosyl-L-methionine.</text>
</comment>
<comment type="subunit">
    <text evidence="1">Monomer.</text>
</comment>
<comment type="subcellular location">
    <subcellularLocation>
        <location evidence="1">Cytoplasm</location>
    </subcellularLocation>
</comment>
<comment type="similarity">
    <text evidence="1">Belongs to the methylthiotransferase family. MiaB subfamily.</text>
</comment>
<feature type="chain" id="PRO_0000374612" description="tRNA-2-methylthio-N(6)-dimethylallyladenosine synthase">
    <location>
        <begin position="1"/>
        <end position="430"/>
    </location>
</feature>
<feature type="domain" description="MTTase N-terminal" evidence="1">
    <location>
        <begin position="2"/>
        <end position="111"/>
    </location>
</feature>
<feature type="domain" description="Radical SAM core" evidence="2">
    <location>
        <begin position="133"/>
        <end position="364"/>
    </location>
</feature>
<feature type="domain" description="TRAM" evidence="1">
    <location>
        <begin position="367"/>
        <end position="428"/>
    </location>
</feature>
<feature type="binding site" evidence="1">
    <location>
        <position position="11"/>
    </location>
    <ligand>
        <name>[4Fe-4S] cluster</name>
        <dbReference type="ChEBI" id="CHEBI:49883"/>
        <label>1</label>
    </ligand>
</feature>
<feature type="binding site" evidence="1">
    <location>
        <position position="47"/>
    </location>
    <ligand>
        <name>[4Fe-4S] cluster</name>
        <dbReference type="ChEBI" id="CHEBI:49883"/>
        <label>1</label>
    </ligand>
</feature>
<feature type="binding site" evidence="1">
    <location>
        <position position="76"/>
    </location>
    <ligand>
        <name>[4Fe-4S] cluster</name>
        <dbReference type="ChEBI" id="CHEBI:49883"/>
        <label>1</label>
    </ligand>
</feature>
<feature type="binding site" evidence="1">
    <location>
        <position position="147"/>
    </location>
    <ligand>
        <name>[4Fe-4S] cluster</name>
        <dbReference type="ChEBI" id="CHEBI:49883"/>
        <label>2</label>
        <note>4Fe-4S-S-AdoMet</note>
    </ligand>
</feature>
<feature type="binding site" evidence="1">
    <location>
        <position position="151"/>
    </location>
    <ligand>
        <name>[4Fe-4S] cluster</name>
        <dbReference type="ChEBI" id="CHEBI:49883"/>
        <label>2</label>
        <note>4Fe-4S-S-AdoMet</note>
    </ligand>
</feature>
<feature type="binding site" evidence="1">
    <location>
        <position position="154"/>
    </location>
    <ligand>
        <name>[4Fe-4S] cluster</name>
        <dbReference type="ChEBI" id="CHEBI:49883"/>
        <label>2</label>
        <note>4Fe-4S-S-AdoMet</note>
    </ligand>
</feature>